<gene>
    <name type="primary">CYP71B35</name>
    <name type="ordered locus">At3g26310</name>
    <name type="ORF">F20C19.3</name>
</gene>
<evidence type="ECO:0000250" key="1"/>
<evidence type="ECO:0000255" key="2"/>
<evidence type="ECO:0000305" key="3"/>
<accession>Q9LIP5</accession>
<accession>Q53XE2</accession>
<comment type="cofactor">
    <cofactor evidence="1">
        <name>heme</name>
        <dbReference type="ChEBI" id="CHEBI:30413"/>
    </cofactor>
</comment>
<comment type="subcellular location">
    <subcellularLocation>
        <location evidence="3">Membrane</location>
        <topology evidence="3">Single-pass membrane protein</topology>
    </subcellularLocation>
</comment>
<comment type="similarity">
    <text evidence="3">Belongs to the cytochrome P450 family.</text>
</comment>
<name>C71BW_ARATH</name>
<dbReference type="EC" id="1.14.-.-"/>
<dbReference type="EMBL" id="AP001298">
    <property type="protein sequence ID" value="BAB02191.1"/>
    <property type="molecule type" value="Genomic_DNA"/>
</dbReference>
<dbReference type="EMBL" id="CP002686">
    <property type="protein sequence ID" value="AEE77144.1"/>
    <property type="molecule type" value="Genomic_DNA"/>
</dbReference>
<dbReference type="EMBL" id="BT011754">
    <property type="protein sequence ID" value="AAS49117.1"/>
    <property type="molecule type" value="mRNA"/>
</dbReference>
<dbReference type="RefSeq" id="NP_189262.1">
    <property type="nucleotide sequence ID" value="NM_113538.2"/>
</dbReference>
<dbReference type="SMR" id="Q9LIP5"/>
<dbReference type="BioGRID" id="7566">
    <property type="interactions" value="1"/>
</dbReference>
<dbReference type="FunCoup" id="Q9LIP5">
    <property type="interactions" value="435"/>
</dbReference>
<dbReference type="STRING" id="3702.Q9LIP5"/>
<dbReference type="iPTMnet" id="Q9LIP5"/>
<dbReference type="PaxDb" id="3702-AT3G26310.1"/>
<dbReference type="ProteomicsDB" id="240453"/>
<dbReference type="EnsemblPlants" id="AT3G26310.1">
    <property type="protein sequence ID" value="AT3G26310.1"/>
    <property type="gene ID" value="AT3G26310"/>
</dbReference>
<dbReference type="GeneID" id="822235"/>
<dbReference type="Gramene" id="AT3G26310.1">
    <property type="protein sequence ID" value="AT3G26310.1"/>
    <property type="gene ID" value="AT3G26310"/>
</dbReference>
<dbReference type="KEGG" id="ath:AT3G26310"/>
<dbReference type="Araport" id="AT3G26310"/>
<dbReference type="TAIR" id="AT3G26310">
    <property type="gene designation" value="CYP71B35"/>
</dbReference>
<dbReference type="eggNOG" id="KOG0156">
    <property type="taxonomic scope" value="Eukaryota"/>
</dbReference>
<dbReference type="HOGENOM" id="CLU_001570_4_1_1"/>
<dbReference type="InParanoid" id="Q9LIP5"/>
<dbReference type="OMA" id="MHLMLGR"/>
<dbReference type="PhylomeDB" id="Q9LIP5"/>
<dbReference type="BioCyc" id="ARA:AT3G26310-MONOMER"/>
<dbReference type="PRO" id="PR:Q9LIP5"/>
<dbReference type="Proteomes" id="UP000006548">
    <property type="component" value="Chromosome 3"/>
</dbReference>
<dbReference type="ExpressionAtlas" id="Q9LIP5">
    <property type="expression patterns" value="baseline and differential"/>
</dbReference>
<dbReference type="GO" id="GO:0016020">
    <property type="term" value="C:membrane"/>
    <property type="evidence" value="ECO:0007669"/>
    <property type="project" value="UniProtKB-SubCell"/>
</dbReference>
<dbReference type="GO" id="GO:0020037">
    <property type="term" value="F:heme binding"/>
    <property type="evidence" value="ECO:0007669"/>
    <property type="project" value="InterPro"/>
</dbReference>
<dbReference type="GO" id="GO:0005506">
    <property type="term" value="F:iron ion binding"/>
    <property type="evidence" value="ECO:0007669"/>
    <property type="project" value="InterPro"/>
</dbReference>
<dbReference type="GO" id="GO:0004497">
    <property type="term" value="F:monooxygenase activity"/>
    <property type="evidence" value="ECO:0007669"/>
    <property type="project" value="UniProtKB-KW"/>
</dbReference>
<dbReference type="GO" id="GO:0016705">
    <property type="term" value="F:oxidoreductase activity, acting on paired donors, with incorporation or reduction of molecular oxygen"/>
    <property type="evidence" value="ECO:0007669"/>
    <property type="project" value="InterPro"/>
</dbReference>
<dbReference type="CDD" id="cd11072">
    <property type="entry name" value="CYP71-like"/>
    <property type="match status" value="1"/>
</dbReference>
<dbReference type="FunFam" id="1.10.630.10:FF:000011">
    <property type="entry name" value="Cytochrome P450 83B1"/>
    <property type="match status" value="1"/>
</dbReference>
<dbReference type="Gene3D" id="1.10.630.10">
    <property type="entry name" value="Cytochrome P450"/>
    <property type="match status" value="1"/>
</dbReference>
<dbReference type="InterPro" id="IPR001128">
    <property type="entry name" value="Cyt_P450"/>
</dbReference>
<dbReference type="InterPro" id="IPR017972">
    <property type="entry name" value="Cyt_P450_CS"/>
</dbReference>
<dbReference type="InterPro" id="IPR002401">
    <property type="entry name" value="Cyt_P450_E_grp-I"/>
</dbReference>
<dbReference type="InterPro" id="IPR036396">
    <property type="entry name" value="Cyt_P450_sf"/>
</dbReference>
<dbReference type="PANTHER" id="PTHR47955:SF19">
    <property type="entry name" value="CYTOCHROME P450 71A9-LIKE ISOFORM X1"/>
    <property type="match status" value="1"/>
</dbReference>
<dbReference type="PANTHER" id="PTHR47955">
    <property type="entry name" value="CYTOCHROME P450 FAMILY 71 PROTEIN"/>
    <property type="match status" value="1"/>
</dbReference>
<dbReference type="Pfam" id="PF00067">
    <property type="entry name" value="p450"/>
    <property type="match status" value="1"/>
</dbReference>
<dbReference type="PRINTS" id="PR00463">
    <property type="entry name" value="EP450I"/>
</dbReference>
<dbReference type="PRINTS" id="PR00385">
    <property type="entry name" value="P450"/>
</dbReference>
<dbReference type="SUPFAM" id="SSF48264">
    <property type="entry name" value="Cytochrome P450"/>
    <property type="match status" value="1"/>
</dbReference>
<dbReference type="PROSITE" id="PS00086">
    <property type="entry name" value="CYTOCHROME_P450"/>
    <property type="match status" value="1"/>
</dbReference>
<proteinExistence type="evidence at transcript level"/>
<feature type="chain" id="PRO_0000052109" description="Cytochrome P450 71B35">
    <location>
        <begin position="1"/>
        <end position="500"/>
    </location>
</feature>
<feature type="transmembrane region" description="Helical" evidence="2">
    <location>
        <begin position="1"/>
        <end position="21"/>
    </location>
</feature>
<feature type="binding site" description="axial binding residue" evidence="1">
    <location>
        <position position="439"/>
    </location>
    <ligand>
        <name>heme</name>
        <dbReference type="ChEBI" id="CHEBI:30413"/>
    </ligand>
    <ligandPart>
        <name>Fe</name>
        <dbReference type="ChEBI" id="CHEBI:18248"/>
    </ligandPart>
</feature>
<organism>
    <name type="scientific">Arabidopsis thaliana</name>
    <name type="common">Mouse-ear cress</name>
    <dbReference type="NCBI Taxonomy" id="3702"/>
    <lineage>
        <taxon>Eukaryota</taxon>
        <taxon>Viridiplantae</taxon>
        <taxon>Streptophyta</taxon>
        <taxon>Embryophyta</taxon>
        <taxon>Tracheophyta</taxon>
        <taxon>Spermatophyta</taxon>
        <taxon>Magnoliopsida</taxon>
        <taxon>eudicotyledons</taxon>
        <taxon>Gunneridae</taxon>
        <taxon>Pentapetalae</taxon>
        <taxon>rosids</taxon>
        <taxon>malvids</taxon>
        <taxon>Brassicales</taxon>
        <taxon>Brassicaceae</taxon>
        <taxon>Camelineae</taxon>
        <taxon>Arabidopsis</taxon>
    </lineage>
</organism>
<protein>
    <recommendedName>
        <fullName>Cytochrome P450 71B35</fullName>
        <ecNumber>1.14.-.-</ecNumber>
    </recommendedName>
</protein>
<reference key="1">
    <citation type="journal article" date="2000" name="DNA Res.">
        <title>Structural analysis of Arabidopsis thaliana chromosome 3. II. Sequence features of the 4,251,695 bp regions covered by 90 P1, TAC and BAC clones.</title>
        <authorList>
            <person name="Kaneko T."/>
            <person name="Katoh T."/>
            <person name="Sato S."/>
            <person name="Nakamura Y."/>
            <person name="Asamizu E."/>
            <person name="Tabata S."/>
        </authorList>
    </citation>
    <scope>NUCLEOTIDE SEQUENCE [LARGE SCALE GENOMIC DNA]</scope>
    <source>
        <strain>cv. Columbia</strain>
    </source>
</reference>
<reference key="2">
    <citation type="journal article" date="2017" name="Plant J.">
        <title>Araport11: a complete reannotation of the Arabidopsis thaliana reference genome.</title>
        <authorList>
            <person name="Cheng C.Y."/>
            <person name="Krishnakumar V."/>
            <person name="Chan A.P."/>
            <person name="Thibaud-Nissen F."/>
            <person name="Schobel S."/>
            <person name="Town C.D."/>
        </authorList>
    </citation>
    <scope>GENOME REANNOTATION</scope>
    <source>
        <strain>cv. Columbia</strain>
    </source>
</reference>
<reference key="3">
    <citation type="submission" date="2004-03" db="EMBL/GenBank/DDBJ databases">
        <title>Arabidopsis ORF clones.</title>
        <authorList>
            <person name="Cheuk R.F."/>
            <person name="Chen H."/>
            <person name="Kim C.J."/>
            <person name="Shinn P."/>
            <person name="Carninci P."/>
            <person name="Hayashizaki Y."/>
            <person name="Ishida J."/>
            <person name="Kamiya A."/>
            <person name="Kawai J."/>
            <person name="Narusaka M."/>
            <person name="Sakurai T."/>
            <person name="Satou M."/>
            <person name="Seki M."/>
            <person name="Shinozaki K."/>
            <person name="Ecker J.R."/>
        </authorList>
    </citation>
    <scope>NUCLEOTIDE SEQUENCE [LARGE SCALE MRNA]</scope>
    <source>
        <strain>cv. Columbia</strain>
    </source>
</reference>
<keyword id="KW-0349">Heme</keyword>
<keyword id="KW-0408">Iron</keyword>
<keyword id="KW-0472">Membrane</keyword>
<keyword id="KW-0479">Metal-binding</keyword>
<keyword id="KW-0503">Monooxygenase</keyword>
<keyword id="KW-0560">Oxidoreductase</keyword>
<keyword id="KW-1185">Reference proteome</keyword>
<keyword id="KW-0812">Transmembrane</keyword>
<keyword id="KW-1133">Transmembrane helix</keyword>
<sequence>MAHIWLLPLIFLVCILLAVFNHKKHPKYRQFPCPPGFPIIGNLHQIGELPHQTLWKLSKKYGPVMHLMLGRVPTVVVSSSDTARQVLRVHDLHCCTRPSLSGPRELSYNYLDIAFSPYDDYWKEVRKLCVQELFSTKQVHSIQPIKDEEVKKMIDSIAESASQKNPVNLNNKCLELTVSVVCRTAFGVSFEGTVLNSDRFNKIVREALEMLGSFSAADFIPYVGWIIDVLTGLQGRRERSKRDLNAFFEQMFDLHKEGKKEGNEDFVDLLLRLEKEEAVLGNDKLTRNHIKAILLDVLLAGIDTSAITMTWAMTELARNPRVMKKVQSEIRTQMGNRSMISFEDMDQLEYLKMVIKETWRLHPTTPLLLPREAMSEFDINGYTIPVKTRLHVNVWAIGRDPDTWKDPEVFLPERFMDNNIDAKGQHFELLPFGGGRRICPAIYMGTTMVEFGLANLLYHFDWKLPEGVEVKDIDVEEAPGLTVNKKNELLLVPEMRRSCG</sequence>